<reference key="1">
    <citation type="journal article" date="2010" name="BMC Genomics">
        <title>A genomic perspective on the potential of Actinobacillus succinogenes for industrial succinate production.</title>
        <authorList>
            <person name="McKinlay J.B."/>
            <person name="Laivenieks M."/>
            <person name="Schindler B.D."/>
            <person name="McKinlay A.A."/>
            <person name="Siddaramappa S."/>
            <person name="Challacombe J.F."/>
            <person name="Lowry S.R."/>
            <person name="Clum A."/>
            <person name="Lapidus A.L."/>
            <person name="Burkhart K.B."/>
            <person name="Harkins V."/>
            <person name="Vieille C."/>
        </authorList>
    </citation>
    <scope>NUCLEOTIDE SEQUENCE [LARGE SCALE GENOMIC DNA]</scope>
    <source>
        <strain>ATCC 55618 / DSM 22257 / CCUG 43843 / 130Z</strain>
    </source>
</reference>
<gene>
    <name evidence="1" type="primary">dapE</name>
    <name type="ordered locus">Asuc_0807</name>
</gene>
<organism>
    <name type="scientific">Actinobacillus succinogenes (strain ATCC 55618 / DSM 22257 / CCUG 43843 / 130Z)</name>
    <dbReference type="NCBI Taxonomy" id="339671"/>
    <lineage>
        <taxon>Bacteria</taxon>
        <taxon>Pseudomonadati</taxon>
        <taxon>Pseudomonadota</taxon>
        <taxon>Gammaproteobacteria</taxon>
        <taxon>Pasteurellales</taxon>
        <taxon>Pasteurellaceae</taxon>
        <taxon>Actinobacillus</taxon>
    </lineage>
</organism>
<evidence type="ECO:0000255" key="1">
    <source>
        <dbReference type="HAMAP-Rule" id="MF_01690"/>
    </source>
</evidence>
<keyword id="KW-0028">Amino-acid biosynthesis</keyword>
<keyword id="KW-0170">Cobalt</keyword>
<keyword id="KW-0220">Diaminopimelate biosynthesis</keyword>
<keyword id="KW-0378">Hydrolase</keyword>
<keyword id="KW-0457">Lysine biosynthesis</keyword>
<keyword id="KW-0479">Metal-binding</keyword>
<keyword id="KW-1185">Reference proteome</keyword>
<keyword id="KW-0862">Zinc</keyword>
<protein>
    <recommendedName>
        <fullName evidence="1">Succinyl-diaminopimelate desuccinylase</fullName>
        <shortName evidence="1">SDAP desuccinylase</shortName>
        <ecNumber evidence="1">3.5.1.18</ecNumber>
    </recommendedName>
    <alternativeName>
        <fullName evidence="1">N-succinyl-LL-2,6-diaminoheptanedioate amidohydrolase</fullName>
    </alternativeName>
</protein>
<comment type="function">
    <text evidence="1">Catalyzes the hydrolysis of N-succinyl-L,L-diaminopimelic acid (SDAP), forming succinate and LL-2,6-diaminopimelate (DAP), an intermediate involved in the bacterial biosynthesis of lysine and meso-diaminopimelic acid, an essential component of bacterial cell walls.</text>
</comment>
<comment type="catalytic activity">
    <reaction evidence="1">
        <text>N-succinyl-(2S,6S)-2,6-diaminopimelate + H2O = (2S,6S)-2,6-diaminopimelate + succinate</text>
        <dbReference type="Rhea" id="RHEA:22608"/>
        <dbReference type="ChEBI" id="CHEBI:15377"/>
        <dbReference type="ChEBI" id="CHEBI:30031"/>
        <dbReference type="ChEBI" id="CHEBI:57609"/>
        <dbReference type="ChEBI" id="CHEBI:58087"/>
        <dbReference type="EC" id="3.5.1.18"/>
    </reaction>
</comment>
<comment type="cofactor">
    <cofactor evidence="1">
        <name>Zn(2+)</name>
        <dbReference type="ChEBI" id="CHEBI:29105"/>
    </cofactor>
    <cofactor evidence="1">
        <name>Co(2+)</name>
        <dbReference type="ChEBI" id="CHEBI:48828"/>
    </cofactor>
    <text evidence="1">Binds 2 Zn(2+) or Co(2+) ions per subunit.</text>
</comment>
<comment type="pathway">
    <text evidence="1">Amino-acid biosynthesis; L-lysine biosynthesis via DAP pathway; LL-2,6-diaminopimelate from (S)-tetrahydrodipicolinate (succinylase route): step 3/3.</text>
</comment>
<comment type="subunit">
    <text evidence="1">Homodimer.</text>
</comment>
<comment type="similarity">
    <text evidence="1">Belongs to the peptidase M20A family. DapE subfamily.</text>
</comment>
<name>DAPE_ACTSZ</name>
<sequence length="376" mass="40886">MKHNIIELAQNLIRRPSVSPDDQGCQQMIAQRLEKLGFTIEWMPFNNTLNLWAKHGCGAPVIAFAGHTDVVPTGDKSQWVYPPFEAEIVDDMLYGRGAADMKGSLAAMVVAAEEYVKANPNHAGTIAFLITSDEEAAAKDGTVRVVETLMARGEKIDFCMVGEPSSSKTLGDIVKNGRRGSVTGNLYIEGVLGHVAYPHLAENPVHKALPFLQELTAYQWDNGNEFFPPTSLQIANIQAGTGSNNVIPGELYVQFNLRYCTEVTDEFIKNTVAEMLKKHGLAYRIEWNLSGKPFLTEPGKLVDAVVDSLESVAGVKPKLDTGGGTSDGRFIALMGAEVVELGPLNATIHKVDERVSVTDLVTLGAVYNQMLVNLLD</sequence>
<proteinExistence type="inferred from homology"/>
<accession>A6VMI0</accession>
<feature type="chain" id="PRO_0000375452" description="Succinyl-diaminopimelate desuccinylase">
    <location>
        <begin position="1"/>
        <end position="376"/>
    </location>
</feature>
<feature type="active site" evidence="1">
    <location>
        <position position="69"/>
    </location>
</feature>
<feature type="active site" description="Proton acceptor" evidence="1">
    <location>
        <position position="134"/>
    </location>
</feature>
<feature type="binding site" evidence="1">
    <location>
        <position position="67"/>
    </location>
    <ligand>
        <name>Zn(2+)</name>
        <dbReference type="ChEBI" id="CHEBI:29105"/>
        <label>1</label>
    </ligand>
</feature>
<feature type="binding site" evidence="1">
    <location>
        <position position="100"/>
    </location>
    <ligand>
        <name>Zn(2+)</name>
        <dbReference type="ChEBI" id="CHEBI:29105"/>
        <label>1</label>
    </ligand>
</feature>
<feature type="binding site" evidence="1">
    <location>
        <position position="100"/>
    </location>
    <ligand>
        <name>Zn(2+)</name>
        <dbReference type="ChEBI" id="CHEBI:29105"/>
        <label>2</label>
    </ligand>
</feature>
<feature type="binding site" evidence="1">
    <location>
        <position position="135"/>
    </location>
    <ligand>
        <name>Zn(2+)</name>
        <dbReference type="ChEBI" id="CHEBI:29105"/>
        <label>2</label>
    </ligand>
</feature>
<feature type="binding site" evidence="1">
    <location>
        <position position="163"/>
    </location>
    <ligand>
        <name>Zn(2+)</name>
        <dbReference type="ChEBI" id="CHEBI:29105"/>
        <label>1</label>
    </ligand>
</feature>
<feature type="binding site" evidence="1">
    <location>
        <position position="349"/>
    </location>
    <ligand>
        <name>Zn(2+)</name>
        <dbReference type="ChEBI" id="CHEBI:29105"/>
        <label>2</label>
    </ligand>
</feature>
<dbReference type="EC" id="3.5.1.18" evidence="1"/>
<dbReference type="EMBL" id="CP000746">
    <property type="protein sequence ID" value="ABR74177.1"/>
    <property type="molecule type" value="Genomic_DNA"/>
</dbReference>
<dbReference type="RefSeq" id="WP_012072555.1">
    <property type="nucleotide sequence ID" value="NC_009655.1"/>
</dbReference>
<dbReference type="SMR" id="A6VMI0"/>
<dbReference type="STRING" id="339671.Asuc_0807"/>
<dbReference type="KEGG" id="asu:Asuc_0807"/>
<dbReference type="eggNOG" id="COG0624">
    <property type="taxonomic scope" value="Bacteria"/>
</dbReference>
<dbReference type="HOGENOM" id="CLU_021802_4_0_6"/>
<dbReference type="OrthoDB" id="9809784at2"/>
<dbReference type="UniPathway" id="UPA00034">
    <property type="reaction ID" value="UER00021"/>
</dbReference>
<dbReference type="Proteomes" id="UP000001114">
    <property type="component" value="Chromosome"/>
</dbReference>
<dbReference type="GO" id="GO:0008777">
    <property type="term" value="F:acetylornithine deacetylase activity"/>
    <property type="evidence" value="ECO:0007669"/>
    <property type="project" value="TreeGrafter"/>
</dbReference>
<dbReference type="GO" id="GO:0050897">
    <property type="term" value="F:cobalt ion binding"/>
    <property type="evidence" value="ECO:0007669"/>
    <property type="project" value="UniProtKB-UniRule"/>
</dbReference>
<dbReference type="GO" id="GO:0009014">
    <property type="term" value="F:succinyl-diaminopimelate desuccinylase activity"/>
    <property type="evidence" value="ECO:0007669"/>
    <property type="project" value="UniProtKB-UniRule"/>
</dbReference>
<dbReference type="GO" id="GO:0008270">
    <property type="term" value="F:zinc ion binding"/>
    <property type="evidence" value="ECO:0007669"/>
    <property type="project" value="UniProtKB-UniRule"/>
</dbReference>
<dbReference type="GO" id="GO:0019877">
    <property type="term" value="P:diaminopimelate biosynthetic process"/>
    <property type="evidence" value="ECO:0007669"/>
    <property type="project" value="UniProtKB-UniRule"/>
</dbReference>
<dbReference type="GO" id="GO:0006526">
    <property type="term" value="P:L-arginine biosynthetic process"/>
    <property type="evidence" value="ECO:0007669"/>
    <property type="project" value="TreeGrafter"/>
</dbReference>
<dbReference type="GO" id="GO:0009089">
    <property type="term" value="P:lysine biosynthetic process via diaminopimelate"/>
    <property type="evidence" value="ECO:0007669"/>
    <property type="project" value="UniProtKB-UniRule"/>
</dbReference>
<dbReference type="CDD" id="cd03891">
    <property type="entry name" value="M20_DapE_proteobac"/>
    <property type="match status" value="1"/>
</dbReference>
<dbReference type="FunFam" id="3.30.70.360:FF:000011">
    <property type="entry name" value="Succinyl-diaminopimelate desuccinylase"/>
    <property type="match status" value="1"/>
</dbReference>
<dbReference type="FunFam" id="3.40.630.10:FF:000005">
    <property type="entry name" value="Succinyl-diaminopimelate desuccinylase"/>
    <property type="match status" value="1"/>
</dbReference>
<dbReference type="Gene3D" id="3.30.70.360">
    <property type="match status" value="1"/>
</dbReference>
<dbReference type="Gene3D" id="3.40.630.10">
    <property type="entry name" value="Zn peptidases"/>
    <property type="match status" value="1"/>
</dbReference>
<dbReference type="HAMAP" id="MF_01690">
    <property type="entry name" value="DapE"/>
    <property type="match status" value="1"/>
</dbReference>
<dbReference type="InterPro" id="IPR001261">
    <property type="entry name" value="ArgE/DapE_CS"/>
</dbReference>
<dbReference type="InterPro" id="IPR036264">
    <property type="entry name" value="Bact_exopeptidase_dim_dom"/>
</dbReference>
<dbReference type="InterPro" id="IPR005941">
    <property type="entry name" value="DapE_proteobac"/>
</dbReference>
<dbReference type="InterPro" id="IPR002933">
    <property type="entry name" value="Peptidase_M20"/>
</dbReference>
<dbReference type="InterPro" id="IPR011650">
    <property type="entry name" value="Peptidase_M20_dimer"/>
</dbReference>
<dbReference type="InterPro" id="IPR050072">
    <property type="entry name" value="Peptidase_M20A"/>
</dbReference>
<dbReference type="NCBIfam" id="TIGR01246">
    <property type="entry name" value="dapE_proteo"/>
    <property type="match status" value="1"/>
</dbReference>
<dbReference type="NCBIfam" id="NF009557">
    <property type="entry name" value="PRK13009.1"/>
    <property type="match status" value="1"/>
</dbReference>
<dbReference type="PANTHER" id="PTHR43808">
    <property type="entry name" value="ACETYLORNITHINE DEACETYLASE"/>
    <property type="match status" value="1"/>
</dbReference>
<dbReference type="PANTHER" id="PTHR43808:SF31">
    <property type="entry name" value="N-ACETYL-L-CITRULLINE DEACETYLASE"/>
    <property type="match status" value="1"/>
</dbReference>
<dbReference type="Pfam" id="PF07687">
    <property type="entry name" value="M20_dimer"/>
    <property type="match status" value="1"/>
</dbReference>
<dbReference type="Pfam" id="PF01546">
    <property type="entry name" value="Peptidase_M20"/>
    <property type="match status" value="1"/>
</dbReference>
<dbReference type="SUPFAM" id="SSF55031">
    <property type="entry name" value="Bacterial exopeptidase dimerisation domain"/>
    <property type="match status" value="1"/>
</dbReference>
<dbReference type="SUPFAM" id="SSF53187">
    <property type="entry name" value="Zn-dependent exopeptidases"/>
    <property type="match status" value="1"/>
</dbReference>
<dbReference type="PROSITE" id="PS00758">
    <property type="entry name" value="ARGE_DAPE_CPG2_1"/>
    <property type="match status" value="1"/>
</dbReference>